<protein>
    <recommendedName>
        <fullName>PAX-interacting protein 1</fullName>
    </recommendedName>
    <alternativeName>
        <fullName>PAX transactivation activation domain-interacting protein</fullName>
    </alternativeName>
</protein>
<proteinExistence type="evidence at protein level"/>
<dbReference type="EMBL" id="AF104261">
    <property type="protein sequence ID" value="AAD17923.1"/>
    <property type="molecule type" value="mRNA"/>
</dbReference>
<dbReference type="EMBL" id="AK144606">
    <property type="protein sequence ID" value="BAE25965.1"/>
    <property type="molecule type" value="mRNA"/>
</dbReference>
<dbReference type="EMBL" id="BC066014">
    <property type="protein sequence ID" value="AAH66014.1"/>
    <property type="molecule type" value="mRNA"/>
</dbReference>
<dbReference type="CCDS" id="CCDS39039.1"/>
<dbReference type="RefSeq" id="NP_061366.2">
    <property type="nucleotide sequence ID" value="NM_018878.3"/>
</dbReference>
<dbReference type="SMR" id="Q6NZQ4"/>
<dbReference type="BioGRID" id="207754">
    <property type="interactions" value="42"/>
</dbReference>
<dbReference type="FunCoup" id="Q6NZQ4">
    <property type="interactions" value="4202"/>
</dbReference>
<dbReference type="IntAct" id="Q6NZQ4">
    <property type="interactions" value="40"/>
</dbReference>
<dbReference type="MINT" id="Q6NZQ4"/>
<dbReference type="STRING" id="10090.ENSMUSP00000002291"/>
<dbReference type="GlyGen" id="Q6NZQ4">
    <property type="glycosylation" value="1 site"/>
</dbReference>
<dbReference type="iPTMnet" id="Q6NZQ4"/>
<dbReference type="PhosphoSitePlus" id="Q6NZQ4"/>
<dbReference type="PaxDb" id="10090-ENSMUSP00000002291"/>
<dbReference type="PeptideAtlas" id="Q6NZQ4"/>
<dbReference type="ProteomicsDB" id="287788"/>
<dbReference type="Pumba" id="Q6NZQ4"/>
<dbReference type="Antibodypedia" id="1874">
    <property type="antibodies" value="136 antibodies from 25 providers"/>
</dbReference>
<dbReference type="Ensembl" id="ENSMUST00000002291.12">
    <property type="protein sequence ID" value="ENSMUSP00000002291.8"/>
    <property type="gene ID" value="ENSMUSG00000002221.12"/>
</dbReference>
<dbReference type="GeneID" id="55982"/>
<dbReference type="KEGG" id="mmu:55982"/>
<dbReference type="UCSC" id="uc033iid.1">
    <property type="organism name" value="mouse"/>
</dbReference>
<dbReference type="AGR" id="MGI:1890430"/>
<dbReference type="CTD" id="22976"/>
<dbReference type="MGI" id="MGI:1890430">
    <property type="gene designation" value="Paxip1"/>
</dbReference>
<dbReference type="VEuPathDB" id="HostDB:ENSMUSG00000002221"/>
<dbReference type="eggNOG" id="KOG2043">
    <property type="taxonomic scope" value="Eukaryota"/>
</dbReference>
<dbReference type="GeneTree" id="ENSGT00940000155757"/>
<dbReference type="HOGENOM" id="CLU_009382_0_0_1"/>
<dbReference type="InParanoid" id="Q6NZQ4"/>
<dbReference type="OMA" id="QMQNRQA"/>
<dbReference type="OrthoDB" id="342264at2759"/>
<dbReference type="PhylomeDB" id="Q6NZQ4"/>
<dbReference type="TreeFam" id="TF329580"/>
<dbReference type="Reactome" id="R-MMU-5693571">
    <property type="pathway name" value="Nonhomologous End-Joining (NHEJ)"/>
</dbReference>
<dbReference type="Reactome" id="R-MMU-9772755">
    <property type="pathway name" value="Formation of WDR5-containing histone-modifying complexes"/>
</dbReference>
<dbReference type="Reactome" id="R-MMU-9818564">
    <property type="pathway name" value="Epigenetic regulation of gene expression by MLL3 and MLL4 complexes"/>
</dbReference>
<dbReference type="BioGRID-ORCS" id="55982">
    <property type="hits" value="30 hits in 124 CRISPR screens"/>
</dbReference>
<dbReference type="ChiTaRS" id="Paxip1">
    <property type="organism name" value="mouse"/>
</dbReference>
<dbReference type="PRO" id="PR:Q6NZQ4"/>
<dbReference type="Proteomes" id="UP000000589">
    <property type="component" value="Chromosome 5"/>
</dbReference>
<dbReference type="RNAct" id="Q6NZQ4">
    <property type="molecule type" value="protein"/>
</dbReference>
<dbReference type="Bgee" id="ENSMUSG00000002221">
    <property type="expression patterns" value="Expressed in embryonic post-anal tail and 256 other cell types or tissues"/>
</dbReference>
<dbReference type="ExpressionAtlas" id="Q6NZQ4">
    <property type="expression patterns" value="baseline and differential"/>
</dbReference>
<dbReference type="GO" id="GO:0005694">
    <property type="term" value="C:chromosome"/>
    <property type="evidence" value="ECO:0007669"/>
    <property type="project" value="UniProtKB-SubCell"/>
</dbReference>
<dbReference type="GO" id="GO:0035097">
    <property type="term" value="C:histone methyltransferase complex"/>
    <property type="evidence" value="ECO:0000314"/>
    <property type="project" value="MGI"/>
</dbReference>
<dbReference type="GO" id="GO:0044666">
    <property type="term" value="C:MLL3/4 complex"/>
    <property type="evidence" value="ECO:0007669"/>
    <property type="project" value="Ensembl"/>
</dbReference>
<dbReference type="GO" id="GO:0016363">
    <property type="term" value="C:nuclear matrix"/>
    <property type="evidence" value="ECO:0007669"/>
    <property type="project" value="UniProtKB-SubCell"/>
</dbReference>
<dbReference type="GO" id="GO:0005654">
    <property type="term" value="C:nucleoplasm"/>
    <property type="evidence" value="ECO:0000304"/>
    <property type="project" value="Reactome"/>
</dbReference>
<dbReference type="GO" id="GO:0005634">
    <property type="term" value="C:nucleus"/>
    <property type="evidence" value="ECO:0000314"/>
    <property type="project" value="UniProtKB"/>
</dbReference>
<dbReference type="GO" id="GO:0060612">
    <property type="term" value="P:adipose tissue development"/>
    <property type="evidence" value="ECO:0000315"/>
    <property type="project" value="UniProtKB"/>
</dbReference>
<dbReference type="GO" id="GO:0060717">
    <property type="term" value="P:chorion development"/>
    <property type="evidence" value="ECO:0000315"/>
    <property type="project" value="UniProtKB"/>
</dbReference>
<dbReference type="GO" id="GO:0006338">
    <property type="term" value="P:chromatin remodeling"/>
    <property type="evidence" value="ECO:0007669"/>
    <property type="project" value="Ensembl"/>
</dbReference>
<dbReference type="GO" id="GO:0006974">
    <property type="term" value="P:DNA damage response"/>
    <property type="evidence" value="ECO:0000314"/>
    <property type="project" value="MGI"/>
</dbReference>
<dbReference type="GO" id="GO:0030330">
    <property type="term" value="P:DNA damage response, signal transduction by p53 class mediator"/>
    <property type="evidence" value="ECO:0007669"/>
    <property type="project" value="Ensembl"/>
</dbReference>
<dbReference type="GO" id="GO:0006310">
    <property type="term" value="P:DNA recombination"/>
    <property type="evidence" value="ECO:0007669"/>
    <property type="project" value="UniProtKB-KW"/>
</dbReference>
<dbReference type="GO" id="GO:0006281">
    <property type="term" value="P:DNA repair"/>
    <property type="evidence" value="ECO:0007669"/>
    <property type="project" value="UniProtKB-KW"/>
</dbReference>
<dbReference type="GO" id="GO:0043542">
    <property type="term" value="P:endothelial cell migration"/>
    <property type="evidence" value="ECO:0000315"/>
    <property type="project" value="UniProtKB"/>
</dbReference>
<dbReference type="GO" id="GO:0043433">
    <property type="term" value="P:negative regulation of DNA-binding transcription factor activity"/>
    <property type="evidence" value="ECO:0000250"/>
    <property type="project" value="UniProtKB"/>
</dbReference>
<dbReference type="GO" id="GO:0045830">
    <property type="term" value="P:positive regulation of isotype switching"/>
    <property type="evidence" value="ECO:0000315"/>
    <property type="project" value="UniProtKB"/>
</dbReference>
<dbReference type="GO" id="GO:0048304">
    <property type="term" value="P:positive regulation of isotype switching to IgG isotypes"/>
    <property type="evidence" value="ECO:0000315"/>
    <property type="project" value="UniProtKB"/>
</dbReference>
<dbReference type="GO" id="GO:0031398">
    <property type="term" value="P:positive regulation of protein ubiquitination"/>
    <property type="evidence" value="ECO:0000315"/>
    <property type="project" value="UniProtKB"/>
</dbReference>
<dbReference type="GO" id="GO:0060261">
    <property type="term" value="P:positive regulation of transcription initiation by RNA polymerase II"/>
    <property type="evidence" value="ECO:0000315"/>
    <property type="project" value="UniProtKB"/>
</dbReference>
<dbReference type="GO" id="GO:1902749">
    <property type="term" value="P:regulation of cell cycle G2/M phase transition"/>
    <property type="evidence" value="ECO:0000315"/>
    <property type="project" value="UniProtKB"/>
</dbReference>
<dbReference type="GO" id="GO:0010212">
    <property type="term" value="P:response to ionizing radiation"/>
    <property type="evidence" value="ECO:0007669"/>
    <property type="project" value="Ensembl"/>
</dbReference>
<dbReference type="GO" id="GO:0001570">
    <property type="term" value="P:vasculogenesis"/>
    <property type="evidence" value="ECO:0000315"/>
    <property type="project" value="UniProtKB"/>
</dbReference>
<dbReference type="CDD" id="cd17714">
    <property type="entry name" value="BRCT_PAXIP1_rpt1"/>
    <property type="match status" value="1"/>
</dbReference>
<dbReference type="CDD" id="cd17710">
    <property type="entry name" value="BRCT_PAXIP1_rpt2"/>
    <property type="match status" value="1"/>
</dbReference>
<dbReference type="CDD" id="cd17711">
    <property type="entry name" value="BRCT_PAXIP1_rpt3"/>
    <property type="match status" value="1"/>
</dbReference>
<dbReference type="CDD" id="cd17730">
    <property type="entry name" value="BRCT_PAXIP1_rpt4"/>
    <property type="match status" value="1"/>
</dbReference>
<dbReference type="CDD" id="cd17712">
    <property type="entry name" value="BRCT_PAXIP1_rpt5"/>
    <property type="match status" value="1"/>
</dbReference>
<dbReference type="CDD" id="cd18440">
    <property type="entry name" value="BRCT_PAXIP1_rpt6"/>
    <property type="match status" value="1"/>
</dbReference>
<dbReference type="FunFam" id="3.40.50.10190:FF:000017">
    <property type="entry name" value="PAX interacting protein 1"/>
    <property type="match status" value="1"/>
</dbReference>
<dbReference type="FunFam" id="3.40.50.10190:FF:000042">
    <property type="entry name" value="PAX interacting protein 1"/>
    <property type="match status" value="1"/>
</dbReference>
<dbReference type="FunFam" id="3.40.50.10190:FF:000046">
    <property type="entry name" value="PAX interacting protein 1"/>
    <property type="match status" value="1"/>
</dbReference>
<dbReference type="Gene3D" id="3.40.50.10190">
    <property type="entry name" value="BRCT domain"/>
    <property type="match status" value="5"/>
</dbReference>
<dbReference type="InterPro" id="IPR001357">
    <property type="entry name" value="BRCT_dom"/>
</dbReference>
<dbReference type="InterPro" id="IPR036420">
    <property type="entry name" value="BRCT_dom_sf"/>
</dbReference>
<dbReference type="InterPro" id="IPR051579">
    <property type="entry name" value="DDR_Transcriptional_Reg"/>
</dbReference>
<dbReference type="PANTHER" id="PTHR23196">
    <property type="entry name" value="PAX TRANSCRIPTION ACTIVATION DOMAIN INTERACTING PROTEIN"/>
    <property type="match status" value="1"/>
</dbReference>
<dbReference type="PANTHER" id="PTHR23196:SF1">
    <property type="entry name" value="PAX-INTERACTING PROTEIN 1"/>
    <property type="match status" value="1"/>
</dbReference>
<dbReference type="Pfam" id="PF00533">
    <property type="entry name" value="BRCT"/>
    <property type="match status" value="1"/>
</dbReference>
<dbReference type="Pfam" id="PF16589">
    <property type="entry name" value="BRCT_2"/>
    <property type="match status" value="1"/>
</dbReference>
<dbReference type="Pfam" id="PF12738">
    <property type="entry name" value="PTCB-BRCT"/>
    <property type="match status" value="2"/>
</dbReference>
<dbReference type="Pfam" id="PF16770">
    <property type="entry name" value="RTT107_BRCT_5"/>
    <property type="match status" value="1"/>
</dbReference>
<dbReference type="SMART" id="SM00292">
    <property type="entry name" value="BRCT"/>
    <property type="match status" value="6"/>
</dbReference>
<dbReference type="SUPFAM" id="SSF52113">
    <property type="entry name" value="BRCT domain"/>
    <property type="match status" value="5"/>
</dbReference>
<dbReference type="PROSITE" id="PS50172">
    <property type="entry name" value="BRCT"/>
    <property type="match status" value="5"/>
</dbReference>
<feature type="chain" id="PRO_0000296263" description="PAX-interacting protein 1">
    <location>
        <begin position="1"/>
        <end position="1056"/>
    </location>
</feature>
<feature type="domain" description="BRCT 1" evidence="4">
    <location>
        <begin position="8"/>
        <end position="93"/>
    </location>
</feature>
<feature type="domain" description="BRCT 2" evidence="4">
    <location>
        <begin position="94"/>
        <end position="183"/>
    </location>
</feature>
<feature type="domain" description="BRCT 3" evidence="4">
    <location>
        <begin position="588"/>
        <end position="681"/>
    </location>
</feature>
<feature type="domain" description="BRCT 4" evidence="4">
    <location>
        <begin position="688"/>
        <end position="776"/>
    </location>
</feature>
<feature type="domain" description="BRCT 5" evidence="4">
    <location>
        <begin position="853"/>
        <end position="934"/>
    </location>
</feature>
<feature type="domain" description="BRCT 6" evidence="4">
    <location>
        <begin position="955"/>
        <end position="989"/>
    </location>
</feature>
<feature type="region of interest" description="Interaction with PAGR1" evidence="9 12">
    <location>
        <begin position="94"/>
        <end position="183"/>
    </location>
</feature>
<feature type="region of interest" description="Disordered" evidence="5">
    <location>
        <begin position="188"/>
        <end position="276"/>
    </location>
</feature>
<feature type="region of interest" description="Disordered" evidence="5">
    <location>
        <begin position="393"/>
        <end position="412"/>
    </location>
</feature>
<feature type="region of interest" description="Disordered" evidence="5">
    <location>
        <begin position="419"/>
        <end position="486"/>
    </location>
</feature>
<feature type="region of interest" description="Interaction with TP53BP1" evidence="1">
    <location>
        <begin position="577"/>
        <end position="1056"/>
    </location>
</feature>
<feature type="short sequence motif" description="Nuclear localization signal" evidence="3">
    <location>
        <begin position="655"/>
        <end position="672"/>
    </location>
</feature>
<feature type="compositionally biased region" description="Acidic residues" evidence="5">
    <location>
        <begin position="188"/>
        <end position="205"/>
    </location>
</feature>
<feature type="compositionally biased region" description="Low complexity" evidence="5">
    <location>
        <begin position="214"/>
        <end position="223"/>
    </location>
</feature>
<feature type="compositionally biased region" description="Low complexity" evidence="5">
    <location>
        <begin position="396"/>
        <end position="412"/>
    </location>
</feature>
<feature type="compositionally biased region" description="Low complexity" evidence="5">
    <location>
        <begin position="419"/>
        <end position="435"/>
    </location>
</feature>
<feature type="compositionally biased region" description="Low complexity" evidence="5">
    <location>
        <begin position="445"/>
        <end position="486"/>
    </location>
</feature>
<feature type="modified residue" description="Phosphoserine" evidence="14">
    <location>
        <position position="223"/>
    </location>
</feature>
<feature type="modified residue" description="Phosphoserine" evidence="14">
    <location>
        <position position="230"/>
    </location>
</feature>
<keyword id="KW-0158">Chromosome</keyword>
<keyword id="KW-0227">DNA damage</keyword>
<keyword id="KW-0233">DNA recombination</keyword>
<keyword id="KW-0234">DNA repair</keyword>
<keyword id="KW-0539">Nucleus</keyword>
<keyword id="KW-0597">Phosphoprotein</keyword>
<keyword id="KW-1185">Reference proteome</keyword>
<keyword id="KW-0677">Repeat</keyword>
<keyword id="KW-0804">Transcription</keyword>
<keyword id="KW-0805">Transcription regulation</keyword>
<gene>
    <name type="primary">Paxip1</name>
    <name type="synonym">Ptip</name>
</gene>
<accession>Q6NZQ4</accession>
<accession>Q9Z0W6</accession>
<organism>
    <name type="scientific">Mus musculus</name>
    <name type="common">Mouse</name>
    <dbReference type="NCBI Taxonomy" id="10090"/>
    <lineage>
        <taxon>Eukaryota</taxon>
        <taxon>Metazoa</taxon>
        <taxon>Chordata</taxon>
        <taxon>Craniata</taxon>
        <taxon>Vertebrata</taxon>
        <taxon>Euteleostomi</taxon>
        <taxon>Mammalia</taxon>
        <taxon>Eutheria</taxon>
        <taxon>Euarchontoglires</taxon>
        <taxon>Glires</taxon>
        <taxon>Rodentia</taxon>
        <taxon>Myomorpha</taxon>
        <taxon>Muroidea</taxon>
        <taxon>Muridae</taxon>
        <taxon>Murinae</taxon>
        <taxon>Mus</taxon>
        <taxon>Mus</taxon>
    </lineage>
</organism>
<sequence length="1056" mass="119269">MSEPAPEVPEELFREVKYYAVGDIDPQVIQLLKAGKAKEVSYNALASHIISEDGDNPEVGEAREVFDLPVVKPSWVTLSVQCGALLPVNGFSPESCQIFFGLTACLSQVSSEDRSALWALVTFHGGSCQLNLNKKCTHLIVPEPKGEKYERAVKRTSIKIVTPDWVLDCVSEKRRKDEAFYHPRLIIYEEEEEEEEEGDNEEQDSQNEGSTEKSSVASSAVASPAEQPCSPKPRAEVSKGELMFDDSSDSSPEKQERSLNWAPAEAPPLNTAQRRLPQGKGPGLINLCANVPPVPGDILPPDMRGNLMAPGQNLQNSERSEILGTWSPAVRTLRNITNNADIQQINRPSNVAHILQSLSAPTKSLEQQVARGQQGHPNASAVLFGQAKGAPETHVLQQHHPPQQPQQQHPALHLQPQIMQLQQQQQQQQQQQQQPQPYPQPPSHQFPQQVHQHQFSQQQLQFPQQPLHPQQQLHRPQQQLQPFQQQHALQQQLHQLQQQQLQHHQLAQLQQQQQQQHNLLQQQQQQQQLQRLQQQQQMQNQAAHLSQASQALQHQVLPQQPLQLSLQPPPQQQQQQQLFGHDPAVEIPEESFLLGCVFAIADYPEQMSDKQLLATWKRIIQAHGGTVDPTFTSRCTHLLCASQVSSMYTQALRERKRCVTAHWLNTVLKKKKLMPPHRALHFPVAFPPGGKPCSQHIISVTGFVDNDRDDLKLMAYLAGAKYTGYLCRSNTVLICKEPSGLKYEKAKEWRIPCVNAQWLGDILLGNFEALRQVQYSRYTAFNMPDPFVPTPHLVLGLLDAWRTPVKVTAELLMGVRLPPKLKPNEVANIQPSSKRARIEDLPPPTKKLTPELTPLVLFTGFEPVQVQQYIKKLYILGGEVAECTKKCTHLIASKVTRTVKFLTAISVVKHIVTPDWLEECFKRQTFIDEQNYILRDAEAEVLFSFSLEESLKRAHVSPLFKTKYFYITPGICPSLATMKAIVECAGGKVLAKQPSFRKLMEHKQNKSLSEIILISCENDLHLCREYFARGIDVHNAEFVLTGVLTQTLDYESYKFN</sequence>
<reference key="1">
    <citation type="journal article" date="2000" name="Nucleic Acids Res.">
        <title>PTIP, a novel BRCT domain-containing protein interacts with Pax2 and is associated with active chromatin.</title>
        <authorList>
            <person name="Lechner M.S."/>
            <person name="Levitan I."/>
            <person name="Dressler G.R."/>
        </authorList>
    </citation>
    <scope>NUCLEOTIDE SEQUENCE [MRNA]</scope>
    <scope>FUNCTION</scope>
    <scope>SUBCELLULAR LOCATION</scope>
    <scope>TISSUE SPECIFICITY</scope>
    <scope>DEVELOPMENTAL STAGE</scope>
    <scope>INTERACTION WITH PAX2</scope>
    <source>
        <strain>FVB/NJ</strain>
    </source>
</reference>
<reference key="2">
    <citation type="journal article" date="2005" name="Science">
        <title>The transcriptional landscape of the mammalian genome.</title>
        <authorList>
            <person name="Carninci P."/>
            <person name="Kasukawa T."/>
            <person name="Katayama S."/>
            <person name="Gough J."/>
            <person name="Frith M.C."/>
            <person name="Maeda N."/>
            <person name="Oyama R."/>
            <person name="Ravasi T."/>
            <person name="Lenhard B."/>
            <person name="Wells C."/>
            <person name="Kodzius R."/>
            <person name="Shimokawa K."/>
            <person name="Bajic V.B."/>
            <person name="Brenner S.E."/>
            <person name="Batalov S."/>
            <person name="Forrest A.R."/>
            <person name="Zavolan M."/>
            <person name="Davis M.J."/>
            <person name="Wilming L.G."/>
            <person name="Aidinis V."/>
            <person name="Allen J.E."/>
            <person name="Ambesi-Impiombato A."/>
            <person name="Apweiler R."/>
            <person name="Aturaliya R.N."/>
            <person name="Bailey T.L."/>
            <person name="Bansal M."/>
            <person name="Baxter L."/>
            <person name="Beisel K.W."/>
            <person name="Bersano T."/>
            <person name="Bono H."/>
            <person name="Chalk A.M."/>
            <person name="Chiu K.P."/>
            <person name="Choudhary V."/>
            <person name="Christoffels A."/>
            <person name="Clutterbuck D.R."/>
            <person name="Crowe M.L."/>
            <person name="Dalla E."/>
            <person name="Dalrymple B.P."/>
            <person name="de Bono B."/>
            <person name="Della Gatta G."/>
            <person name="di Bernardo D."/>
            <person name="Down T."/>
            <person name="Engstrom P."/>
            <person name="Fagiolini M."/>
            <person name="Faulkner G."/>
            <person name="Fletcher C.F."/>
            <person name="Fukushima T."/>
            <person name="Furuno M."/>
            <person name="Futaki S."/>
            <person name="Gariboldi M."/>
            <person name="Georgii-Hemming P."/>
            <person name="Gingeras T.R."/>
            <person name="Gojobori T."/>
            <person name="Green R.E."/>
            <person name="Gustincich S."/>
            <person name="Harbers M."/>
            <person name="Hayashi Y."/>
            <person name="Hensch T.K."/>
            <person name="Hirokawa N."/>
            <person name="Hill D."/>
            <person name="Huminiecki L."/>
            <person name="Iacono M."/>
            <person name="Ikeo K."/>
            <person name="Iwama A."/>
            <person name="Ishikawa T."/>
            <person name="Jakt M."/>
            <person name="Kanapin A."/>
            <person name="Katoh M."/>
            <person name="Kawasawa Y."/>
            <person name="Kelso J."/>
            <person name="Kitamura H."/>
            <person name="Kitano H."/>
            <person name="Kollias G."/>
            <person name="Krishnan S.P."/>
            <person name="Kruger A."/>
            <person name="Kummerfeld S.K."/>
            <person name="Kurochkin I.V."/>
            <person name="Lareau L.F."/>
            <person name="Lazarevic D."/>
            <person name="Lipovich L."/>
            <person name="Liu J."/>
            <person name="Liuni S."/>
            <person name="McWilliam S."/>
            <person name="Madan Babu M."/>
            <person name="Madera M."/>
            <person name="Marchionni L."/>
            <person name="Matsuda H."/>
            <person name="Matsuzawa S."/>
            <person name="Miki H."/>
            <person name="Mignone F."/>
            <person name="Miyake S."/>
            <person name="Morris K."/>
            <person name="Mottagui-Tabar S."/>
            <person name="Mulder N."/>
            <person name="Nakano N."/>
            <person name="Nakauchi H."/>
            <person name="Ng P."/>
            <person name="Nilsson R."/>
            <person name="Nishiguchi S."/>
            <person name="Nishikawa S."/>
            <person name="Nori F."/>
            <person name="Ohara O."/>
            <person name="Okazaki Y."/>
            <person name="Orlando V."/>
            <person name="Pang K.C."/>
            <person name="Pavan W.J."/>
            <person name="Pavesi G."/>
            <person name="Pesole G."/>
            <person name="Petrovsky N."/>
            <person name="Piazza S."/>
            <person name="Reed J."/>
            <person name="Reid J.F."/>
            <person name="Ring B.Z."/>
            <person name="Ringwald M."/>
            <person name="Rost B."/>
            <person name="Ruan Y."/>
            <person name="Salzberg S.L."/>
            <person name="Sandelin A."/>
            <person name="Schneider C."/>
            <person name="Schoenbach C."/>
            <person name="Sekiguchi K."/>
            <person name="Semple C.A."/>
            <person name="Seno S."/>
            <person name="Sessa L."/>
            <person name="Sheng Y."/>
            <person name="Shibata Y."/>
            <person name="Shimada H."/>
            <person name="Shimada K."/>
            <person name="Silva D."/>
            <person name="Sinclair B."/>
            <person name="Sperling S."/>
            <person name="Stupka E."/>
            <person name="Sugiura K."/>
            <person name="Sultana R."/>
            <person name="Takenaka Y."/>
            <person name="Taki K."/>
            <person name="Tammoja K."/>
            <person name="Tan S.L."/>
            <person name="Tang S."/>
            <person name="Taylor M.S."/>
            <person name="Tegner J."/>
            <person name="Teichmann S.A."/>
            <person name="Ueda H.R."/>
            <person name="van Nimwegen E."/>
            <person name="Verardo R."/>
            <person name="Wei C.L."/>
            <person name="Yagi K."/>
            <person name="Yamanishi H."/>
            <person name="Zabarovsky E."/>
            <person name="Zhu S."/>
            <person name="Zimmer A."/>
            <person name="Hide W."/>
            <person name="Bult C."/>
            <person name="Grimmond S.M."/>
            <person name="Teasdale R.D."/>
            <person name="Liu E.T."/>
            <person name="Brusic V."/>
            <person name="Quackenbush J."/>
            <person name="Wahlestedt C."/>
            <person name="Mattick J.S."/>
            <person name="Hume D.A."/>
            <person name="Kai C."/>
            <person name="Sasaki D."/>
            <person name="Tomaru Y."/>
            <person name="Fukuda S."/>
            <person name="Kanamori-Katayama M."/>
            <person name="Suzuki M."/>
            <person name="Aoki J."/>
            <person name="Arakawa T."/>
            <person name="Iida J."/>
            <person name="Imamura K."/>
            <person name="Itoh M."/>
            <person name="Kato T."/>
            <person name="Kawaji H."/>
            <person name="Kawagashira N."/>
            <person name="Kawashima T."/>
            <person name="Kojima M."/>
            <person name="Kondo S."/>
            <person name="Konno H."/>
            <person name="Nakano K."/>
            <person name="Ninomiya N."/>
            <person name="Nishio T."/>
            <person name="Okada M."/>
            <person name="Plessy C."/>
            <person name="Shibata K."/>
            <person name="Shiraki T."/>
            <person name="Suzuki S."/>
            <person name="Tagami M."/>
            <person name="Waki K."/>
            <person name="Watahiki A."/>
            <person name="Okamura-Oho Y."/>
            <person name="Suzuki H."/>
            <person name="Kawai J."/>
            <person name="Hayashizaki Y."/>
        </authorList>
    </citation>
    <scope>NUCLEOTIDE SEQUENCE [LARGE SCALE MRNA]</scope>
    <source>
        <tissue>Lung</tissue>
    </source>
</reference>
<reference key="3">
    <citation type="journal article" date="2004" name="Genome Res.">
        <title>The status, quality, and expansion of the NIH full-length cDNA project: the Mammalian Gene Collection (MGC).</title>
        <authorList>
            <consortium name="The MGC Project Team"/>
        </authorList>
    </citation>
    <scope>NUCLEOTIDE SEQUENCE [LARGE SCALE MRNA]</scope>
    <source>
        <strain>C57BL/6J</strain>
        <tissue>Brain</tissue>
    </source>
</reference>
<reference key="4">
    <citation type="journal article" date="2003" name="Mol. Cell. Biol.">
        <title>BRCT domain-containing protein PTIP is essential for progression through mitosis.</title>
        <authorList>
            <person name="Cho E.A."/>
            <person name="Prindle M.J."/>
            <person name="Dressler G.R."/>
        </authorList>
    </citation>
    <scope>FUNCTION</scope>
    <scope>DISRUPTION PHENOTYPE</scope>
</reference>
<reference key="5">
    <citation type="journal article" date="2007" name="Dev. Cell">
        <title>The BRCT-domain containing protein PTIP links PAX2 to a histone H3, lysine 4 methyltransferase complex.</title>
        <authorList>
            <person name="Patel S.R."/>
            <person name="Kim D."/>
            <person name="Levitan I."/>
            <person name="Dressler G.R."/>
        </authorList>
    </citation>
    <scope>FUNCTION</scope>
    <scope>DISRUPTION PHENOTYPE</scope>
</reference>
<reference key="6">
    <citation type="journal article" date="2009" name="J. Biol. Chem.">
        <title>Accumulation of Pax2 transactivation domain interaction protein (PTIP) at sites of DNA breaks via RNF8-dependent pathway is required for cell survival after DNA damage.</title>
        <authorList>
            <person name="Gong Z."/>
            <person name="Cho Y.-W."/>
            <person name="Kim J.-E."/>
            <person name="Ge K."/>
            <person name="Chen J."/>
        </authorList>
    </citation>
    <scope>FUNCTION</scope>
    <scope>SUBCELLULAR LOCATION</scope>
    <scope>INTERACTION WITH PAGR1A</scope>
</reference>
<reference key="7">
    <citation type="journal article" date="2009" name="J. Biol. Chem.">
        <title>PTIP regulates 53BP1 and SMC1 at the DNA damage sites.</title>
        <authorList>
            <person name="Wu J."/>
            <person name="Prindle M.J."/>
            <person name="Dressler G.R."/>
            <person name="Yu X."/>
        </authorList>
    </citation>
    <scope>FUNCTION</scope>
</reference>
<reference key="8">
    <citation type="journal article" date="2010" name="Cell">
        <title>A tissue-specific atlas of mouse protein phosphorylation and expression.</title>
        <authorList>
            <person name="Huttlin E.L."/>
            <person name="Jedrychowski M.P."/>
            <person name="Elias J.E."/>
            <person name="Goswami T."/>
            <person name="Rad R."/>
            <person name="Beausoleil S.A."/>
            <person name="Villen J."/>
            <person name="Haas W."/>
            <person name="Sowa M.E."/>
            <person name="Gygi S.P."/>
        </authorList>
    </citation>
    <scope>PHOSPHORYLATION [LARGE SCALE ANALYSIS] AT SER-223 AND SER-230</scope>
    <scope>IDENTIFICATION BY MASS SPECTROMETRY [LARGE SCALE ANALYSIS]</scope>
    <source>
        <tissue>Kidney</tissue>
        <tissue>Spleen</tissue>
    </source>
</reference>
<reference key="9">
    <citation type="journal article" date="2010" name="Science">
        <title>PTIP promotes chromatin changes critical for immunoglobulin class switch recombination.</title>
        <authorList>
            <person name="Daniel J.A."/>
            <person name="Santos M.A."/>
            <person name="Wang Z."/>
            <person name="Zang C."/>
            <person name="Schwab K.R."/>
            <person name="Jankovic M."/>
            <person name="Filsuf D."/>
            <person name="Chen H.T."/>
            <person name="Gazumyan A."/>
            <person name="Yamane A."/>
            <person name="Cho Y.W."/>
            <person name="Sun H.W."/>
            <person name="Ge K."/>
            <person name="Peng W."/>
            <person name="Nussenzweig M.C."/>
            <person name="Casellas R."/>
            <person name="Dressler G.R."/>
            <person name="Zhao K."/>
            <person name="Nussenzweig A."/>
        </authorList>
    </citation>
    <scope>FUNCTION</scope>
</reference>
<reference key="10">
    <citation type="journal article" date="2016" name="Genes Dev.">
        <title>A PTIP-PA1 subcomplex promotes transcription for IgH class switching independently from the associated MLL3/MLL4 methyltransferase complex.</title>
        <authorList>
            <person name="Starnes L.M."/>
            <person name="Su D."/>
            <person name="Pikkupeura L.M."/>
            <person name="Weinert B.T."/>
            <person name="Santos M.A."/>
            <person name="Mund A."/>
            <person name="Soria R."/>
            <person name="Cho Y.W."/>
            <person name="Pozdnyakova I."/>
            <person name="Kubec Hoejfeldt M."/>
            <person name="Vala A."/>
            <person name="Yang W."/>
            <person name="Lopez-Mendez B."/>
            <person name="Lee J.E."/>
            <person name="Peng W."/>
            <person name="Yuan J."/>
            <person name="Ge K."/>
            <person name="Montoya G."/>
            <person name="Nussenzweig A."/>
            <person name="Choudhary C."/>
            <person name="Daniel J.A."/>
        </authorList>
    </citation>
    <scope>FUNCTION</scope>
    <scope>INTERACTION WITH PAGR1A</scope>
    <scope>SUBCELLULAR LOCATION</scope>
    <scope>DOMAIN</scope>
</reference>
<comment type="function">
    <text evidence="1 6 7 8 9 10 11 12">Involved in DNA damage response and in transcriptional regulation through histone methyltransferase (HMT) complexes such as the MLL2/MLL3 complex. Plays a role in early development. In DNA damage response is required for cell survival after ionizing radiation. In vitro shown to be involved in the homologous recombination mechanism for the repair of double-strand breaks (DSBs). Its localization to DNA damage foci requires Rnf8 and Ube2n. Recruits Tp53bp1 to DNA damage foci and, at least in particular repair processes, effective DNA damage response appears to require the association with Tp53bp1 phosphorylated by Atm. Together with Tp53bp1 regulates Atm association (By similarity). Proposed to recruit Pagr1 to sites of DNA damage and the Pagr1:Paxip1 complex is required for cell survival in response to DNA damage independently of the MLL2/MLL3 complex. However, this function has been questioned (PubMed:19124460, PubMed:26744420). Promotes ubiquitination of PCNA following UV irradiation and may regulate recruitment of polymerase eta and Rad51 to chromatin after DNA damage. Proposed to be involved in transcriptional regulation by linking MLL-containing histone methyltransferase (HMT) complexes to gene promoters by interacting with promoter-bound transcription factors such as Pax2. Associates with gene promoters that are known to be regulated by Kmt2d/Mll2 (By similarity). During immunoglobulin class switching in activated B-cells is involved in trimethylation of histone H3 at 'Lys-4' and in transcription initiation of downstream switch regions at the immunoglobulin heavy-chain (Igh) locus; this function appears to involve the recruitment of MLL-containing HMT complexes. Conflictingly, its function in transcriptional regulation during immunoglobulin class switching is reported to be independent of the MLL2/MLL3 complex (PubMed:20671152, PubMed:26744420).</text>
</comment>
<comment type="subunit">
    <text evidence="2 6 9 12">Interacts with the C-terminal transactivation domain of PAX2 (PubMed:10908331). Forms a constitutive complex with PAGR1 independently of the MLL2/MLL3 complex (PubMed:19124460, PubMed:26744420). Interacts with TP53BP1 (when phosphorylated at the N-terminus by ATM) (By similarity). Interacts with HLTF (By similarity). Component of the KMT2 family MLL2/MLL3 complex (also named ASCOM complex), at least composed of the HMTs KMT2D and/or KMT2C, the common subunits ASH2L, RBBP5, WDR5 and DPY30, and the complex type-specific subunits PAXIP1/PTIP, PAGR1, NCOA6 and KDM6A; required for the association of PAGR1 with the MLL2/MLL3 complex (By similarity). Interacts with NUPR1; this interaction prevents PAXIP1 inhibition of PAX2 transcription factor activity (By similarity).</text>
</comment>
<comment type="interaction">
    <interactant intactId="EBI-1395317">
        <id>Q6NZQ4</id>
    </interactant>
    <interactant intactId="EBI-11667455">
        <id>Q99L02</id>
        <label>Pagr1a</label>
    </interactant>
    <organismsDiffer>false</organismsDiffer>
    <experiments>11</experiments>
</comment>
<comment type="interaction">
    <interactant intactId="EBI-1395317">
        <id>Q6NZQ4</id>
    </interactant>
    <interactant intactId="EBI-1395232">
        <id>P32114</id>
        <label>Pax2</label>
    </interactant>
    <organismsDiffer>false</organismsDiffer>
    <experiments>3</experiments>
</comment>
<comment type="interaction">
    <interactant intactId="EBI-1395317">
        <id>Q6NZQ4</id>
    </interactant>
    <interactant intactId="EBI-1395250">
        <id>P32114-2</id>
        <label>Pax2</label>
    </interactant>
    <organismsDiffer>false</organismsDiffer>
    <experiments>2</experiments>
</comment>
<comment type="interaction">
    <interactant intactId="EBI-1395317">
        <id>Q6NZQ4</id>
    </interactant>
    <interactant intactId="EBI-296260">
        <id>Q02650</id>
        <label>Pax5</label>
    </interactant>
    <organismsDiffer>false</organismsDiffer>
    <experiments>3</experiments>
</comment>
<comment type="interaction">
    <interactant intactId="EBI-1395317">
        <id>Q6NZQ4</id>
    </interactant>
    <interactant intactId="EBI-2372223">
        <id>Q9BTK6</id>
        <label>PAGR1</label>
    </interactant>
    <organismsDiffer>true</organismsDiffer>
    <experiments>5</experiments>
</comment>
<comment type="interaction">
    <interactant intactId="EBI-1395317">
        <id>Q6NZQ4</id>
    </interactant>
    <interactant intactId="EBI-396540">
        <id>Q12888</id>
        <label>TP53BP1</label>
    </interactant>
    <organismsDiffer>true</organismsDiffer>
    <experiments>5</experiments>
</comment>
<comment type="subcellular location">
    <subcellularLocation>
        <location evidence="6 9">Nucleus matrix</location>
    </subcellularLocation>
    <subcellularLocation>
        <location evidence="2">Chromosome</location>
    </subcellularLocation>
    <text evidence="2">Localizes to DNA damage foci upon ionizing radiation.</text>
</comment>
<comment type="tissue specificity">
    <text evidence="6">Expression detected in all tissues examined, including brain stem, cerebellum, cortex, heart, spleen, kidney, liver, thymus and lung.</text>
</comment>
<comment type="developmental stage">
    <text evidence="6">Highly expressed in embryonic kidney and brain.</text>
</comment>
<comment type="domain">
    <text evidence="12">The BRCT 1 and 2 domains mediate the interaction with PAGR1A.</text>
</comment>
<comment type="domain">
    <text evidence="12">The BRCT 5 and 6 domains mediate the association with the MLL2/MLL3 complex (PubMed:26744420). The BRCT 5 and 6 domains function as a single module and are necessary and sufficient for in vitro phospho-specific binding (substrates phosphorylated by the kinases ataxia telangiectasia-mutated (ATM), ataxia telangiectasia and RAD3-related (ATR) in response to gamma irradiation). In contrast, in vivo two pairs of BRCT domains (3-6) bind to phosphorylated TP53BP1 much more efficiently.</text>
</comment>
<comment type="disruption phenotype">
    <text evidence="7 8">Mice are developmentally retarded, disorganized, and embryonic lethal by 9.5 dpc. Mutant cells appear to replicate DNA but show reduced levels of mitosis and widespread cell death by 8.5 dpc. DNA damage appears to precede nuclear condensation at 7 dpc. Reduced levels of histone H3 methylated at 'Lys-4 in developing tissues.</text>
</comment>
<comment type="caution">
    <text evidence="13">The terminology of MLL proteins in mammalia is not consistent also concerning the terminology of MLL protein-containing complexes. The decribed MLL2/MLL3 complex is commonly described as MLL3/MLL4 complex in literature.</text>
</comment>
<evidence type="ECO:0000250" key="1"/>
<evidence type="ECO:0000250" key="2">
    <source>
        <dbReference type="UniProtKB" id="Q6ZW49"/>
    </source>
</evidence>
<evidence type="ECO:0000255" key="3"/>
<evidence type="ECO:0000255" key="4">
    <source>
        <dbReference type="PROSITE-ProRule" id="PRU00033"/>
    </source>
</evidence>
<evidence type="ECO:0000256" key="5">
    <source>
        <dbReference type="SAM" id="MobiDB-lite"/>
    </source>
</evidence>
<evidence type="ECO:0000269" key="6">
    <source>
    </source>
</evidence>
<evidence type="ECO:0000269" key="7">
    <source>
    </source>
</evidence>
<evidence type="ECO:0000269" key="8">
    <source>
    </source>
</evidence>
<evidence type="ECO:0000269" key="9">
    <source>
    </source>
</evidence>
<evidence type="ECO:0000269" key="10">
    <source>
    </source>
</evidence>
<evidence type="ECO:0000269" key="11">
    <source>
    </source>
</evidence>
<evidence type="ECO:0000269" key="12">
    <source>
    </source>
</evidence>
<evidence type="ECO:0000305" key="13"/>
<evidence type="ECO:0007744" key="14">
    <source>
    </source>
</evidence>
<name>PAXI1_MOUSE</name>